<dbReference type="EC" id="7.1.1.-" evidence="1"/>
<dbReference type="EMBL" id="AP009370">
    <property type="protein sequence ID" value="BAF50168.1"/>
    <property type="molecule type" value="Genomic_DNA"/>
</dbReference>
<dbReference type="RefSeq" id="YP_001123343.1">
    <property type="nucleotide sequence ID" value="NC_009269.1"/>
</dbReference>
<dbReference type="SMR" id="A4QKG3"/>
<dbReference type="GeneID" id="4961827"/>
<dbReference type="GO" id="GO:0009535">
    <property type="term" value="C:chloroplast thylakoid membrane"/>
    <property type="evidence" value="ECO:0007669"/>
    <property type="project" value="UniProtKB-SubCell"/>
</dbReference>
<dbReference type="GO" id="GO:0051287">
    <property type="term" value="F:NAD binding"/>
    <property type="evidence" value="ECO:0007669"/>
    <property type="project" value="InterPro"/>
</dbReference>
<dbReference type="GO" id="GO:0016655">
    <property type="term" value="F:oxidoreductase activity, acting on NAD(P)H, quinone or similar compound as acceptor"/>
    <property type="evidence" value="ECO:0007669"/>
    <property type="project" value="UniProtKB-UniRule"/>
</dbReference>
<dbReference type="GO" id="GO:0048038">
    <property type="term" value="F:quinone binding"/>
    <property type="evidence" value="ECO:0007669"/>
    <property type="project" value="UniProtKB-KW"/>
</dbReference>
<dbReference type="GO" id="GO:0019684">
    <property type="term" value="P:photosynthesis, light reaction"/>
    <property type="evidence" value="ECO:0007669"/>
    <property type="project" value="UniProtKB-UniRule"/>
</dbReference>
<dbReference type="FunFam" id="1.10.645.10:FF:000003">
    <property type="entry name" value="NAD(P)H-quinone oxidoreductase subunit H, chloroplastic"/>
    <property type="match status" value="1"/>
</dbReference>
<dbReference type="Gene3D" id="1.10.645.10">
    <property type="entry name" value="Cytochrome-c3 Hydrogenase, chain B"/>
    <property type="match status" value="1"/>
</dbReference>
<dbReference type="HAMAP" id="MF_01358">
    <property type="entry name" value="NDH1_NuoD"/>
    <property type="match status" value="1"/>
</dbReference>
<dbReference type="InterPro" id="IPR001135">
    <property type="entry name" value="NADH_Q_OxRdtase_suD"/>
</dbReference>
<dbReference type="InterPro" id="IPR014029">
    <property type="entry name" value="NADH_UbQ_OxRdtase_49kDa_CS"/>
</dbReference>
<dbReference type="InterPro" id="IPR022885">
    <property type="entry name" value="NDH1_su_D/H"/>
</dbReference>
<dbReference type="InterPro" id="IPR029014">
    <property type="entry name" value="NiFe-Hase_large"/>
</dbReference>
<dbReference type="NCBIfam" id="NF004739">
    <property type="entry name" value="PRK06075.1"/>
    <property type="match status" value="1"/>
</dbReference>
<dbReference type="NCBIfam" id="NF005649">
    <property type="entry name" value="PRK07415.1"/>
    <property type="match status" value="1"/>
</dbReference>
<dbReference type="PANTHER" id="PTHR11993:SF10">
    <property type="entry name" value="NADH DEHYDROGENASE [UBIQUINONE] IRON-SULFUR PROTEIN 2, MITOCHONDRIAL"/>
    <property type="match status" value="1"/>
</dbReference>
<dbReference type="PANTHER" id="PTHR11993">
    <property type="entry name" value="NADH-UBIQUINONE OXIDOREDUCTASE 49 KDA SUBUNIT"/>
    <property type="match status" value="1"/>
</dbReference>
<dbReference type="Pfam" id="PF00346">
    <property type="entry name" value="Complex1_49kDa"/>
    <property type="match status" value="1"/>
</dbReference>
<dbReference type="SUPFAM" id="SSF56762">
    <property type="entry name" value="HydB/Nqo4-like"/>
    <property type="match status" value="1"/>
</dbReference>
<dbReference type="PROSITE" id="PS00535">
    <property type="entry name" value="COMPLEX1_49K"/>
    <property type="match status" value="1"/>
</dbReference>
<organism>
    <name type="scientific">Barbarea verna</name>
    <name type="common">Land cress</name>
    <name type="synonym">Erysimum vernum</name>
    <dbReference type="NCBI Taxonomy" id="50458"/>
    <lineage>
        <taxon>Eukaryota</taxon>
        <taxon>Viridiplantae</taxon>
        <taxon>Streptophyta</taxon>
        <taxon>Embryophyta</taxon>
        <taxon>Tracheophyta</taxon>
        <taxon>Spermatophyta</taxon>
        <taxon>Magnoliopsida</taxon>
        <taxon>eudicotyledons</taxon>
        <taxon>Gunneridae</taxon>
        <taxon>Pentapetalae</taxon>
        <taxon>rosids</taxon>
        <taxon>malvids</taxon>
        <taxon>Brassicales</taxon>
        <taxon>Brassicaceae</taxon>
        <taxon>Cardamineae</taxon>
        <taxon>Barbarea</taxon>
    </lineage>
</organism>
<protein>
    <recommendedName>
        <fullName evidence="1">NAD(P)H-quinone oxidoreductase subunit H, chloroplastic</fullName>
        <ecNumber evidence="1">7.1.1.-</ecNumber>
    </recommendedName>
    <alternativeName>
        <fullName>NAD(P)H dehydrogenase subunit H</fullName>
    </alternativeName>
    <alternativeName>
        <fullName evidence="1">NADH-plastoquinone oxidoreductase 49 kDa subunit</fullName>
    </alternativeName>
    <alternativeName>
        <fullName evidence="1">NADH-plastoquinone oxidoreductase subunit H</fullName>
    </alternativeName>
</protein>
<proteinExistence type="inferred from homology"/>
<keyword id="KW-0150">Chloroplast</keyword>
<keyword id="KW-0472">Membrane</keyword>
<keyword id="KW-0520">NAD</keyword>
<keyword id="KW-0521">NADP</keyword>
<keyword id="KW-0934">Plastid</keyword>
<keyword id="KW-0618">Plastoquinone</keyword>
<keyword id="KW-0874">Quinone</keyword>
<keyword id="KW-0793">Thylakoid</keyword>
<keyword id="KW-1278">Translocase</keyword>
<keyword id="KW-0813">Transport</keyword>
<gene>
    <name evidence="1" type="primary">ndhH</name>
</gene>
<reference key="1">
    <citation type="submission" date="2007-03" db="EMBL/GenBank/DDBJ databases">
        <title>Sequencing analysis of Barbarea verna chloroplast DNA.</title>
        <authorList>
            <person name="Hosouchi T."/>
            <person name="Tsuruoka H."/>
            <person name="Kotani H."/>
        </authorList>
    </citation>
    <scope>NUCLEOTIDE SEQUENCE [LARGE SCALE GENOMIC DNA]</scope>
</reference>
<evidence type="ECO:0000255" key="1">
    <source>
        <dbReference type="HAMAP-Rule" id="MF_01358"/>
    </source>
</evidence>
<name>NDHH_BARVE</name>
<accession>A4QKG3</accession>
<comment type="function">
    <text evidence="1">NDH shuttles electrons from NAD(P)H:plastoquinone, via FMN and iron-sulfur (Fe-S) centers, to quinones in the photosynthetic chain and possibly in a chloroplast respiratory chain. The immediate electron acceptor for the enzyme in this species is believed to be plastoquinone. Couples the redox reaction to proton translocation, and thus conserves the redox energy in a proton gradient.</text>
</comment>
<comment type="catalytic activity">
    <reaction evidence="1">
        <text>a plastoquinone + NADH + (n+1) H(+)(in) = a plastoquinol + NAD(+) + n H(+)(out)</text>
        <dbReference type="Rhea" id="RHEA:42608"/>
        <dbReference type="Rhea" id="RHEA-COMP:9561"/>
        <dbReference type="Rhea" id="RHEA-COMP:9562"/>
        <dbReference type="ChEBI" id="CHEBI:15378"/>
        <dbReference type="ChEBI" id="CHEBI:17757"/>
        <dbReference type="ChEBI" id="CHEBI:57540"/>
        <dbReference type="ChEBI" id="CHEBI:57945"/>
        <dbReference type="ChEBI" id="CHEBI:62192"/>
    </reaction>
</comment>
<comment type="catalytic activity">
    <reaction evidence="1">
        <text>a plastoquinone + NADPH + (n+1) H(+)(in) = a plastoquinol + NADP(+) + n H(+)(out)</text>
        <dbReference type="Rhea" id="RHEA:42612"/>
        <dbReference type="Rhea" id="RHEA-COMP:9561"/>
        <dbReference type="Rhea" id="RHEA-COMP:9562"/>
        <dbReference type="ChEBI" id="CHEBI:15378"/>
        <dbReference type="ChEBI" id="CHEBI:17757"/>
        <dbReference type="ChEBI" id="CHEBI:57783"/>
        <dbReference type="ChEBI" id="CHEBI:58349"/>
        <dbReference type="ChEBI" id="CHEBI:62192"/>
    </reaction>
</comment>
<comment type="subunit">
    <text evidence="1">NDH is composed of at least 16 different subunits, 5 of which are encoded in the nucleus.</text>
</comment>
<comment type="subcellular location">
    <subcellularLocation>
        <location evidence="1">Plastid</location>
        <location evidence="1">Chloroplast thylakoid membrane</location>
        <topology evidence="1">Peripheral membrane protein</topology>
        <orientation evidence="1">Stromal side</orientation>
    </subcellularLocation>
</comment>
<comment type="similarity">
    <text evidence="1">Belongs to the complex I 49 kDa subunit family.</text>
</comment>
<feature type="chain" id="PRO_0000357967" description="NAD(P)H-quinone oxidoreductase subunit H, chloroplastic">
    <location>
        <begin position="1"/>
        <end position="393"/>
    </location>
</feature>
<sequence length="393" mass="45475">MKRPVTGKDLMIVNMGPHHPSMHGVLRLIVTLDGEDVVDCEPILGYLHRGMEKIAENRAIIQYLPYVTRWDYLATMFTEAITVNGPEQLGNIQVPKRASYIRVIMLELSRIASHLLWLGPFMADIGAQTPFFYIFREREFVYDLFEAATGMRMMHNFFRIGGIAADLPYGWIDKCLDFCDYFLTEVVEYQKLITRNPIFLERVEGVGIVGGEEAINWGLSGPMLRASGIPWDLRKVDRYESYDEFEWEIQWQKQGDSLARYLVRLSEMTESIKIIQQALEGLPGGPYENLESRGFDRKRNPEWNDFEYRFISKKPSPTFELSKQELYVRVEAPKGELGIFLIGDQSGFPWRWKIRPPGFINLQILPELVKRMKLADIMTILGSIDIIMGEVDR</sequence>
<geneLocation type="chloroplast"/>